<evidence type="ECO:0000255" key="1">
    <source>
        <dbReference type="HAMAP-Rule" id="MF_00451"/>
    </source>
</evidence>
<accession>B0BW02</accession>
<gene>
    <name evidence="1" type="primary">ndk</name>
    <name type="ordered locus">RrIowa_0108</name>
</gene>
<dbReference type="EC" id="2.7.4.6" evidence="1"/>
<dbReference type="EMBL" id="CP000766">
    <property type="protein sequence ID" value="ABY72028.1"/>
    <property type="molecule type" value="Genomic_DNA"/>
</dbReference>
<dbReference type="RefSeq" id="WP_010976767.1">
    <property type="nucleotide sequence ID" value="NC_010263.3"/>
</dbReference>
<dbReference type="SMR" id="B0BW02"/>
<dbReference type="GeneID" id="95361814"/>
<dbReference type="KEGG" id="rrj:RrIowa_0108"/>
<dbReference type="eggNOG" id="COG0105">
    <property type="taxonomic scope" value="Bacteria"/>
</dbReference>
<dbReference type="HOGENOM" id="CLU_060216_8_1_5"/>
<dbReference type="Proteomes" id="UP000000796">
    <property type="component" value="Chromosome"/>
</dbReference>
<dbReference type="GO" id="GO:0005737">
    <property type="term" value="C:cytoplasm"/>
    <property type="evidence" value="ECO:0007669"/>
    <property type="project" value="UniProtKB-SubCell"/>
</dbReference>
<dbReference type="GO" id="GO:0005524">
    <property type="term" value="F:ATP binding"/>
    <property type="evidence" value="ECO:0007669"/>
    <property type="project" value="UniProtKB-UniRule"/>
</dbReference>
<dbReference type="GO" id="GO:0046872">
    <property type="term" value="F:metal ion binding"/>
    <property type="evidence" value="ECO:0007669"/>
    <property type="project" value="UniProtKB-KW"/>
</dbReference>
<dbReference type="GO" id="GO:0004550">
    <property type="term" value="F:nucleoside diphosphate kinase activity"/>
    <property type="evidence" value="ECO:0007669"/>
    <property type="project" value="UniProtKB-UniRule"/>
</dbReference>
<dbReference type="GO" id="GO:0006241">
    <property type="term" value="P:CTP biosynthetic process"/>
    <property type="evidence" value="ECO:0007669"/>
    <property type="project" value="UniProtKB-UniRule"/>
</dbReference>
<dbReference type="GO" id="GO:0006183">
    <property type="term" value="P:GTP biosynthetic process"/>
    <property type="evidence" value="ECO:0007669"/>
    <property type="project" value="UniProtKB-UniRule"/>
</dbReference>
<dbReference type="GO" id="GO:0006228">
    <property type="term" value="P:UTP biosynthetic process"/>
    <property type="evidence" value="ECO:0007669"/>
    <property type="project" value="UniProtKB-UniRule"/>
</dbReference>
<dbReference type="CDD" id="cd04413">
    <property type="entry name" value="NDPk_I"/>
    <property type="match status" value="1"/>
</dbReference>
<dbReference type="FunFam" id="3.30.70.141:FF:000003">
    <property type="entry name" value="Nucleoside diphosphate kinase"/>
    <property type="match status" value="1"/>
</dbReference>
<dbReference type="Gene3D" id="3.30.70.141">
    <property type="entry name" value="Nucleoside diphosphate kinase-like domain"/>
    <property type="match status" value="1"/>
</dbReference>
<dbReference type="HAMAP" id="MF_00451">
    <property type="entry name" value="NDP_kinase"/>
    <property type="match status" value="1"/>
</dbReference>
<dbReference type="InterPro" id="IPR034907">
    <property type="entry name" value="NDK-like_dom"/>
</dbReference>
<dbReference type="InterPro" id="IPR036850">
    <property type="entry name" value="NDK-like_dom_sf"/>
</dbReference>
<dbReference type="InterPro" id="IPR001564">
    <property type="entry name" value="Nucleoside_diP_kinase"/>
</dbReference>
<dbReference type="InterPro" id="IPR023005">
    <property type="entry name" value="Nucleoside_diP_kinase_AS"/>
</dbReference>
<dbReference type="NCBIfam" id="NF001908">
    <property type="entry name" value="PRK00668.1"/>
    <property type="match status" value="1"/>
</dbReference>
<dbReference type="PANTHER" id="PTHR46161">
    <property type="entry name" value="NUCLEOSIDE DIPHOSPHATE KINASE"/>
    <property type="match status" value="1"/>
</dbReference>
<dbReference type="PANTHER" id="PTHR46161:SF3">
    <property type="entry name" value="NUCLEOSIDE DIPHOSPHATE KINASE DDB_G0292928-RELATED"/>
    <property type="match status" value="1"/>
</dbReference>
<dbReference type="Pfam" id="PF00334">
    <property type="entry name" value="NDK"/>
    <property type="match status" value="1"/>
</dbReference>
<dbReference type="PRINTS" id="PR01243">
    <property type="entry name" value="NUCDPKINASE"/>
</dbReference>
<dbReference type="SMART" id="SM00562">
    <property type="entry name" value="NDK"/>
    <property type="match status" value="1"/>
</dbReference>
<dbReference type="SUPFAM" id="SSF54919">
    <property type="entry name" value="Nucleoside diphosphate kinase, NDK"/>
    <property type="match status" value="1"/>
</dbReference>
<dbReference type="PROSITE" id="PS00469">
    <property type="entry name" value="NDPK"/>
    <property type="match status" value="1"/>
</dbReference>
<dbReference type="PROSITE" id="PS51374">
    <property type="entry name" value="NDPK_LIKE"/>
    <property type="match status" value="1"/>
</dbReference>
<keyword id="KW-0067">ATP-binding</keyword>
<keyword id="KW-0963">Cytoplasm</keyword>
<keyword id="KW-0418">Kinase</keyword>
<keyword id="KW-0460">Magnesium</keyword>
<keyword id="KW-0479">Metal-binding</keyword>
<keyword id="KW-0546">Nucleotide metabolism</keyword>
<keyword id="KW-0547">Nucleotide-binding</keyword>
<keyword id="KW-0597">Phosphoprotein</keyword>
<keyword id="KW-0808">Transferase</keyword>
<organism>
    <name type="scientific">Rickettsia rickettsii (strain Iowa)</name>
    <dbReference type="NCBI Taxonomy" id="452659"/>
    <lineage>
        <taxon>Bacteria</taxon>
        <taxon>Pseudomonadati</taxon>
        <taxon>Pseudomonadota</taxon>
        <taxon>Alphaproteobacteria</taxon>
        <taxon>Rickettsiales</taxon>
        <taxon>Rickettsiaceae</taxon>
        <taxon>Rickettsieae</taxon>
        <taxon>Rickettsia</taxon>
        <taxon>spotted fever group</taxon>
    </lineage>
</organism>
<proteinExistence type="inferred from homology"/>
<reference key="1">
    <citation type="journal article" date="2008" name="Infect. Immun.">
        <title>Genomic comparison of virulent Rickettsia rickettsii Sheila Smith and avirulent Rickettsia rickettsii Iowa.</title>
        <authorList>
            <person name="Ellison D.W."/>
            <person name="Clark T.R."/>
            <person name="Sturdevant D.E."/>
            <person name="Virtaneva K."/>
            <person name="Porcella S.F."/>
            <person name="Hackstadt T."/>
        </authorList>
    </citation>
    <scope>NUCLEOTIDE SEQUENCE [LARGE SCALE GENOMIC DNA]</scope>
    <source>
        <strain>Iowa</strain>
    </source>
</reference>
<comment type="function">
    <text evidence="1">Major role in the synthesis of nucleoside triphosphates other than ATP. The ATP gamma phosphate is transferred to the NDP beta phosphate via a ping-pong mechanism, using a phosphorylated active-site intermediate.</text>
</comment>
<comment type="catalytic activity">
    <reaction evidence="1">
        <text>a 2'-deoxyribonucleoside 5'-diphosphate + ATP = a 2'-deoxyribonucleoside 5'-triphosphate + ADP</text>
        <dbReference type="Rhea" id="RHEA:44640"/>
        <dbReference type="ChEBI" id="CHEBI:30616"/>
        <dbReference type="ChEBI" id="CHEBI:61560"/>
        <dbReference type="ChEBI" id="CHEBI:73316"/>
        <dbReference type="ChEBI" id="CHEBI:456216"/>
        <dbReference type="EC" id="2.7.4.6"/>
    </reaction>
</comment>
<comment type="catalytic activity">
    <reaction evidence="1">
        <text>a ribonucleoside 5'-diphosphate + ATP = a ribonucleoside 5'-triphosphate + ADP</text>
        <dbReference type="Rhea" id="RHEA:18113"/>
        <dbReference type="ChEBI" id="CHEBI:30616"/>
        <dbReference type="ChEBI" id="CHEBI:57930"/>
        <dbReference type="ChEBI" id="CHEBI:61557"/>
        <dbReference type="ChEBI" id="CHEBI:456216"/>
        <dbReference type="EC" id="2.7.4.6"/>
    </reaction>
</comment>
<comment type="cofactor">
    <cofactor evidence="1">
        <name>Mg(2+)</name>
        <dbReference type="ChEBI" id="CHEBI:18420"/>
    </cofactor>
</comment>
<comment type="subunit">
    <text evidence="1">Homotetramer.</text>
</comment>
<comment type="subcellular location">
    <subcellularLocation>
        <location evidence="1">Cytoplasm</location>
    </subcellularLocation>
</comment>
<comment type="similarity">
    <text evidence="1">Belongs to the NDK family.</text>
</comment>
<name>NDK_RICRO</name>
<protein>
    <recommendedName>
        <fullName evidence="1">Nucleoside diphosphate kinase</fullName>
        <shortName evidence="1">NDK</shortName>
        <shortName evidence="1">NDP kinase</shortName>
        <ecNumber evidence="1">2.7.4.6</ecNumber>
    </recommendedName>
    <alternativeName>
        <fullName evidence="1">Nucleoside-2-P kinase</fullName>
    </alternativeName>
</protein>
<sequence length="140" mass="15690">MTIQYTFSMIKPDAIKRNKIGQVNTYLENAGLKIVAQKMKFLTKYEAACFYDEHRARPFFNSLVEYITSGAVVLQVLKGEDAITLNRTVMGATNPAEAEAGTIRKDLGESIEANSIHGSDSENSAKREIEFFFNKSEIIE</sequence>
<feature type="chain" id="PRO_1000080974" description="Nucleoside diphosphate kinase">
    <location>
        <begin position="1"/>
        <end position="140"/>
    </location>
</feature>
<feature type="active site" description="Pros-phosphohistidine intermediate" evidence="1">
    <location>
        <position position="117"/>
    </location>
</feature>
<feature type="binding site" evidence="1">
    <location>
        <position position="11"/>
    </location>
    <ligand>
        <name>ATP</name>
        <dbReference type="ChEBI" id="CHEBI:30616"/>
    </ligand>
</feature>
<feature type="binding site" evidence="1">
    <location>
        <position position="59"/>
    </location>
    <ligand>
        <name>ATP</name>
        <dbReference type="ChEBI" id="CHEBI:30616"/>
    </ligand>
</feature>
<feature type="binding site" evidence="1">
    <location>
        <position position="87"/>
    </location>
    <ligand>
        <name>ATP</name>
        <dbReference type="ChEBI" id="CHEBI:30616"/>
    </ligand>
</feature>
<feature type="binding site" evidence="1">
    <location>
        <position position="93"/>
    </location>
    <ligand>
        <name>ATP</name>
        <dbReference type="ChEBI" id="CHEBI:30616"/>
    </ligand>
</feature>
<feature type="binding site" evidence="1">
    <location>
        <position position="104"/>
    </location>
    <ligand>
        <name>ATP</name>
        <dbReference type="ChEBI" id="CHEBI:30616"/>
    </ligand>
</feature>
<feature type="binding site" evidence="1">
    <location>
        <position position="114"/>
    </location>
    <ligand>
        <name>ATP</name>
        <dbReference type="ChEBI" id="CHEBI:30616"/>
    </ligand>
</feature>